<evidence type="ECO:0000250" key="1"/>
<evidence type="ECO:0000255" key="2">
    <source>
        <dbReference type="HAMAP-Rule" id="MF_00100"/>
    </source>
</evidence>
<evidence type="ECO:0000256" key="3">
    <source>
        <dbReference type="SAM" id="MobiDB-lite"/>
    </source>
</evidence>
<organism>
    <name type="scientific">Saccharophagus degradans (strain 2-40 / ATCC 43961 / DSM 17024)</name>
    <dbReference type="NCBI Taxonomy" id="203122"/>
    <lineage>
        <taxon>Bacteria</taxon>
        <taxon>Pseudomonadati</taxon>
        <taxon>Pseudomonadota</taxon>
        <taxon>Gammaproteobacteria</taxon>
        <taxon>Cellvibrionales</taxon>
        <taxon>Cellvibrionaceae</taxon>
        <taxon>Saccharophagus</taxon>
    </lineage>
</organism>
<reference key="1">
    <citation type="journal article" date="2008" name="PLoS Genet.">
        <title>Complete genome sequence of the complex carbohydrate-degrading marine bacterium, Saccharophagus degradans strain 2-40 T.</title>
        <authorList>
            <person name="Weiner R.M."/>
            <person name="Taylor L.E. II"/>
            <person name="Henrissat B."/>
            <person name="Hauser L."/>
            <person name="Land M."/>
            <person name="Coutinho P.M."/>
            <person name="Rancurel C."/>
            <person name="Saunders E.H."/>
            <person name="Longmire A.G."/>
            <person name="Zhang H."/>
            <person name="Bayer E.A."/>
            <person name="Gilbert H.J."/>
            <person name="Larimer F."/>
            <person name="Zhulin I.B."/>
            <person name="Ekborg N.A."/>
            <person name="Lamed R."/>
            <person name="Richardson P.M."/>
            <person name="Borovok I."/>
            <person name="Hutcheson S."/>
        </authorList>
    </citation>
    <scope>NUCLEOTIDE SEQUENCE [LARGE SCALE GENOMIC DNA]</scope>
    <source>
        <strain>2-40 / ATCC 43961 / DSM 17024</strain>
    </source>
</reference>
<keyword id="KW-0963">Cytoplasm</keyword>
<keyword id="KW-0342">GTP-binding</keyword>
<keyword id="KW-0396">Initiation factor</keyword>
<keyword id="KW-0547">Nucleotide-binding</keyword>
<keyword id="KW-0648">Protein biosynthesis</keyword>
<keyword id="KW-1185">Reference proteome</keyword>
<comment type="function">
    <text evidence="2">One of the essential components for the initiation of protein synthesis. Protects formylmethionyl-tRNA from spontaneous hydrolysis and promotes its binding to the 30S ribosomal subunits. Also involved in the hydrolysis of GTP during the formation of the 70S ribosomal complex.</text>
</comment>
<comment type="subcellular location">
    <subcellularLocation>
        <location evidence="2">Cytoplasm</location>
    </subcellularLocation>
</comment>
<comment type="similarity">
    <text evidence="2">Belongs to the TRAFAC class translation factor GTPase superfamily. Classic translation factor GTPase family. IF-2 subfamily.</text>
</comment>
<gene>
    <name evidence="2" type="primary">infB</name>
    <name type="ordered locus">Sde_2708</name>
</gene>
<feature type="chain" id="PRO_1000008326" description="Translation initiation factor IF-2">
    <location>
        <begin position="1"/>
        <end position="908"/>
    </location>
</feature>
<feature type="domain" description="tr-type G">
    <location>
        <begin position="409"/>
        <end position="578"/>
    </location>
</feature>
<feature type="region of interest" description="Disordered" evidence="3">
    <location>
        <begin position="122"/>
        <end position="180"/>
    </location>
</feature>
<feature type="region of interest" description="Disordered" evidence="3">
    <location>
        <begin position="203"/>
        <end position="267"/>
    </location>
</feature>
<feature type="region of interest" description="G1" evidence="1">
    <location>
        <begin position="418"/>
        <end position="425"/>
    </location>
</feature>
<feature type="region of interest" description="G2" evidence="1">
    <location>
        <begin position="443"/>
        <end position="447"/>
    </location>
</feature>
<feature type="region of interest" description="G3" evidence="1">
    <location>
        <begin position="464"/>
        <end position="467"/>
    </location>
</feature>
<feature type="region of interest" description="G4" evidence="1">
    <location>
        <begin position="518"/>
        <end position="521"/>
    </location>
</feature>
<feature type="region of interest" description="G5" evidence="1">
    <location>
        <begin position="554"/>
        <end position="556"/>
    </location>
</feature>
<feature type="compositionally biased region" description="Acidic residues" evidence="3">
    <location>
        <begin position="132"/>
        <end position="143"/>
    </location>
</feature>
<feature type="compositionally biased region" description="Low complexity" evidence="3">
    <location>
        <begin position="157"/>
        <end position="166"/>
    </location>
</feature>
<feature type="compositionally biased region" description="Basic and acidic residues" evidence="3">
    <location>
        <begin position="223"/>
        <end position="248"/>
    </location>
</feature>
<feature type="compositionally biased region" description="Basic residues" evidence="3">
    <location>
        <begin position="256"/>
        <end position="267"/>
    </location>
</feature>
<feature type="binding site" evidence="2">
    <location>
        <begin position="418"/>
        <end position="425"/>
    </location>
    <ligand>
        <name>GTP</name>
        <dbReference type="ChEBI" id="CHEBI:37565"/>
    </ligand>
</feature>
<feature type="binding site" evidence="2">
    <location>
        <begin position="464"/>
        <end position="468"/>
    </location>
    <ligand>
        <name>GTP</name>
        <dbReference type="ChEBI" id="CHEBI:37565"/>
    </ligand>
</feature>
<feature type="binding site" evidence="2">
    <location>
        <begin position="518"/>
        <end position="521"/>
    </location>
    <ligand>
        <name>GTP</name>
        <dbReference type="ChEBI" id="CHEBI:37565"/>
    </ligand>
</feature>
<protein>
    <recommendedName>
        <fullName evidence="2">Translation initiation factor IF-2</fullName>
    </recommendedName>
</protein>
<accession>Q21H61</accession>
<name>IF2_SACD2</name>
<sequence>MAEVTVSELAKSVGAPVERILSQMQQAGLTHQSPDDVVSDEEKQKLLTFLKSSHGETVAEPKKITLKRKTTTTLKTGSGSGRKTVNVEVRKKRTYVKRDEVADEIEESAAVAEAEVAKVEEPVVEPVQEPEVAAEPEVVEAPEPEPVVEAIEEAPVEEPAAPAAPVISQTTTASSLVDDAEEMRIRAASARIKAEEERLAAIEKARKEKAAKPAPAPGPAAAAKEDARPTKHVEDLAKLKKPHDKKDEEFDEDGKKHNKKAGKAVKKVAGPKKVASALDYVEDKEEIEEVIHAPKPKRLSANRGPRPVIKVSNKHGFKKPTGKITYDVEIPETITVGELAQRMNVKAGEVVKCLMKMGTMATVNQPIDQETAQLVVEELGHKAVLISADAIEIKLQEEVAANVDGETIPRAPIVTVMGHVDHGKTSLLDYIRKAKVASGEAGGITQHIGAYRVQTSHGELTFLDTPGHAAFTAMRARGAQCTDVVILVVAADDGVMPQTEEAVQHARAAGVPLVVAINKMDKESADPDRVKNELSAKEVIPEDWGGDTQFIEVSAHTGQGIEELLEAVALQAELLELSAPKDVPARGVVVESRMDKGRGVVATVLVQGGDLKSGDILLAGQSFGRVRAMTNEFGEQVKTAGPSSPVEILGLDTPPQAGDEFLVVPDERKAREVAEFRAERERQEKLQRQQAAKLENMFAGIGENETKVLSVVLKTDVRGSLEAIQAALLDIGNDEVQVNIVGGGVGGITGNDVNLALTTGAIVLGFNVRADASARKLAETESIEIRYYSIIYQLIDEVKSALSGMLDPERVEEIVGIAEVRETFRSPKFGQVAGCMVVEGSVHRNKPIRVLRENVVIFEGELESLRRFKDDVSEVRNGTECGIGVKNYDVKVGDQIEVFDVKEVAREL</sequence>
<dbReference type="EMBL" id="CP000282">
    <property type="protein sequence ID" value="ABD81968.1"/>
    <property type="molecule type" value="Genomic_DNA"/>
</dbReference>
<dbReference type="RefSeq" id="WP_011469185.1">
    <property type="nucleotide sequence ID" value="NC_007912.1"/>
</dbReference>
<dbReference type="SMR" id="Q21H61"/>
<dbReference type="STRING" id="203122.Sde_2708"/>
<dbReference type="GeneID" id="98614365"/>
<dbReference type="KEGG" id="sde:Sde_2708"/>
<dbReference type="eggNOG" id="COG0532">
    <property type="taxonomic scope" value="Bacteria"/>
</dbReference>
<dbReference type="HOGENOM" id="CLU_006301_6_3_6"/>
<dbReference type="OrthoDB" id="9811804at2"/>
<dbReference type="Proteomes" id="UP000001947">
    <property type="component" value="Chromosome"/>
</dbReference>
<dbReference type="GO" id="GO:0005829">
    <property type="term" value="C:cytosol"/>
    <property type="evidence" value="ECO:0007669"/>
    <property type="project" value="TreeGrafter"/>
</dbReference>
<dbReference type="GO" id="GO:0005525">
    <property type="term" value="F:GTP binding"/>
    <property type="evidence" value="ECO:0007669"/>
    <property type="project" value="UniProtKB-KW"/>
</dbReference>
<dbReference type="GO" id="GO:0003924">
    <property type="term" value="F:GTPase activity"/>
    <property type="evidence" value="ECO:0007669"/>
    <property type="project" value="UniProtKB-UniRule"/>
</dbReference>
<dbReference type="GO" id="GO:0003743">
    <property type="term" value="F:translation initiation factor activity"/>
    <property type="evidence" value="ECO:0007669"/>
    <property type="project" value="UniProtKB-UniRule"/>
</dbReference>
<dbReference type="CDD" id="cd01887">
    <property type="entry name" value="IF2_eIF5B"/>
    <property type="match status" value="1"/>
</dbReference>
<dbReference type="CDD" id="cd03702">
    <property type="entry name" value="IF2_mtIF2_II"/>
    <property type="match status" value="1"/>
</dbReference>
<dbReference type="CDD" id="cd03692">
    <property type="entry name" value="mtIF2_IVc"/>
    <property type="match status" value="1"/>
</dbReference>
<dbReference type="FunFam" id="2.40.30.10:FF:000007">
    <property type="entry name" value="Translation initiation factor IF-2"/>
    <property type="match status" value="1"/>
</dbReference>
<dbReference type="FunFam" id="2.40.30.10:FF:000008">
    <property type="entry name" value="Translation initiation factor IF-2"/>
    <property type="match status" value="1"/>
</dbReference>
<dbReference type="FunFam" id="3.40.50.10050:FF:000001">
    <property type="entry name" value="Translation initiation factor IF-2"/>
    <property type="match status" value="1"/>
</dbReference>
<dbReference type="FunFam" id="3.40.50.300:FF:000019">
    <property type="entry name" value="Translation initiation factor IF-2"/>
    <property type="match status" value="1"/>
</dbReference>
<dbReference type="Gene3D" id="3.40.50.300">
    <property type="entry name" value="P-loop containing nucleotide triphosphate hydrolases"/>
    <property type="match status" value="1"/>
</dbReference>
<dbReference type="Gene3D" id="3.30.56.50">
    <property type="entry name" value="Putative DNA-binding domain, N-terminal subdomain of bacterial translation initiation factor IF2"/>
    <property type="match status" value="1"/>
</dbReference>
<dbReference type="Gene3D" id="2.40.30.10">
    <property type="entry name" value="Translation factors"/>
    <property type="match status" value="2"/>
</dbReference>
<dbReference type="Gene3D" id="3.40.50.10050">
    <property type="entry name" value="Translation initiation factor IF- 2, domain 3"/>
    <property type="match status" value="1"/>
</dbReference>
<dbReference type="HAMAP" id="MF_00100_B">
    <property type="entry name" value="IF_2_B"/>
    <property type="match status" value="1"/>
</dbReference>
<dbReference type="InterPro" id="IPR009061">
    <property type="entry name" value="DNA-bd_dom_put_sf"/>
</dbReference>
<dbReference type="InterPro" id="IPR053905">
    <property type="entry name" value="EF-G-like_DII"/>
</dbReference>
<dbReference type="InterPro" id="IPR013575">
    <property type="entry name" value="IF2_assoc_dom_bac"/>
</dbReference>
<dbReference type="InterPro" id="IPR044145">
    <property type="entry name" value="IF2_II"/>
</dbReference>
<dbReference type="InterPro" id="IPR006847">
    <property type="entry name" value="IF2_N"/>
</dbReference>
<dbReference type="InterPro" id="IPR027417">
    <property type="entry name" value="P-loop_NTPase"/>
</dbReference>
<dbReference type="InterPro" id="IPR005225">
    <property type="entry name" value="Small_GTP-bd"/>
</dbReference>
<dbReference type="InterPro" id="IPR000795">
    <property type="entry name" value="T_Tr_GTP-bd_dom"/>
</dbReference>
<dbReference type="InterPro" id="IPR000178">
    <property type="entry name" value="TF_IF2_bacterial-like"/>
</dbReference>
<dbReference type="InterPro" id="IPR015760">
    <property type="entry name" value="TIF_IF2"/>
</dbReference>
<dbReference type="InterPro" id="IPR023115">
    <property type="entry name" value="TIF_IF2_dom3"/>
</dbReference>
<dbReference type="InterPro" id="IPR036925">
    <property type="entry name" value="TIF_IF2_dom3_sf"/>
</dbReference>
<dbReference type="InterPro" id="IPR009000">
    <property type="entry name" value="Transl_B-barrel_sf"/>
</dbReference>
<dbReference type="NCBIfam" id="TIGR00487">
    <property type="entry name" value="IF-2"/>
    <property type="match status" value="1"/>
</dbReference>
<dbReference type="NCBIfam" id="TIGR00231">
    <property type="entry name" value="small_GTP"/>
    <property type="match status" value="1"/>
</dbReference>
<dbReference type="PANTHER" id="PTHR43381:SF5">
    <property type="entry name" value="TR-TYPE G DOMAIN-CONTAINING PROTEIN"/>
    <property type="match status" value="1"/>
</dbReference>
<dbReference type="PANTHER" id="PTHR43381">
    <property type="entry name" value="TRANSLATION INITIATION FACTOR IF-2-RELATED"/>
    <property type="match status" value="1"/>
</dbReference>
<dbReference type="Pfam" id="PF22042">
    <property type="entry name" value="EF-G_D2"/>
    <property type="match status" value="1"/>
</dbReference>
<dbReference type="Pfam" id="PF00009">
    <property type="entry name" value="GTP_EFTU"/>
    <property type="match status" value="1"/>
</dbReference>
<dbReference type="Pfam" id="PF11987">
    <property type="entry name" value="IF-2"/>
    <property type="match status" value="1"/>
</dbReference>
<dbReference type="Pfam" id="PF08364">
    <property type="entry name" value="IF2_assoc"/>
    <property type="match status" value="1"/>
</dbReference>
<dbReference type="Pfam" id="PF04760">
    <property type="entry name" value="IF2_N"/>
    <property type="match status" value="2"/>
</dbReference>
<dbReference type="SUPFAM" id="SSF52156">
    <property type="entry name" value="Initiation factor IF2/eIF5b, domain 3"/>
    <property type="match status" value="1"/>
</dbReference>
<dbReference type="SUPFAM" id="SSF52540">
    <property type="entry name" value="P-loop containing nucleoside triphosphate hydrolases"/>
    <property type="match status" value="1"/>
</dbReference>
<dbReference type="SUPFAM" id="SSF46955">
    <property type="entry name" value="Putative DNA-binding domain"/>
    <property type="match status" value="1"/>
</dbReference>
<dbReference type="SUPFAM" id="SSF50447">
    <property type="entry name" value="Translation proteins"/>
    <property type="match status" value="2"/>
</dbReference>
<dbReference type="PROSITE" id="PS51722">
    <property type="entry name" value="G_TR_2"/>
    <property type="match status" value="1"/>
</dbReference>
<dbReference type="PROSITE" id="PS01176">
    <property type="entry name" value="IF2"/>
    <property type="match status" value="1"/>
</dbReference>
<proteinExistence type="inferred from homology"/>